<gene>
    <name evidence="1" type="primary">rpsG</name>
    <name type="ordered locus">NAMH_0183</name>
</gene>
<comment type="function">
    <text evidence="1">One of the primary rRNA binding proteins, it binds directly to 16S rRNA where it nucleates assembly of the head domain of the 30S subunit. Is located at the subunit interface close to the decoding center, probably blocks exit of the E-site tRNA.</text>
</comment>
<comment type="subunit">
    <text evidence="1">Part of the 30S ribosomal subunit. Contacts proteins S9 and S11.</text>
</comment>
<comment type="similarity">
    <text evidence="1">Belongs to the universal ribosomal protein uS7 family.</text>
</comment>
<protein>
    <recommendedName>
        <fullName evidence="1">Small ribosomal subunit protein uS7</fullName>
    </recommendedName>
    <alternativeName>
        <fullName evidence="2">30S ribosomal protein S7</fullName>
    </alternativeName>
</protein>
<organism>
    <name type="scientific">Nautilia profundicola (strain ATCC BAA-1463 / DSM 18972 / AmH)</name>
    <dbReference type="NCBI Taxonomy" id="598659"/>
    <lineage>
        <taxon>Bacteria</taxon>
        <taxon>Pseudomonadati</taxon>
        <taxon>Campylobacterota</taxon>
        <taxon>Epsilonproteobacteria</taxon>
        <taxon>Nautiliales</taxon>
        <taxon>Nautiliaceae</taxon>
        <taxon>Nautilia</taxon>
    </lineage>
</organism>
<sequence>MRRRRAPKRPVMPDPVYNSEVVTKFINKVMWDGKKTLAERIVYGAIEKLGEKGEEKGIDLFFKAIENVKPLLEVRSRRVGGATYQVPMEVRPERQQTLSIRWIVDAARNRNERTMVERLANELFDAANERGAAFKKREDTHRMAEANKAFAHYRW</sequence>
<accession>B9L7J9</accession>
<name>RS7_NAUPA</name>
<proteinExistence type="inferred from homology"/>
<evidence type="ECO:0000255" key="1">
    <source>
        <dbReference type="HAMAP-Rule" id="MF_00480"/>
    </source>
</evidence>
<evidence type="ECO:0000305" key="2"/>
<keyword id="KW-0687">Ribonucleoprotein</keyword>
<keyword id="KW-0689">Ribosomal protein</keyword>
<keyword id="KW-0694">RNA-binding</keyword>
<keyword id="KW-0699">rRNA-binding</keyword>
<keyword id="KW-0820">tRNA-binding</keyword>
<dbReference type="EMBL" id="CP001279">
    <property type="protein sequence ID" value="ACM93714.1"/>
    <property type="molecule type" value="Genomic_DNA"/>
</dbReference>
<dbReference type="RefSeq" id="WP_015902766.1">
    <property type="nucleotide sequence ID" value="NC_012115.1"/>
</dbReference>
<dbReference type="SMR" id="B9L7J9"/>
<dbReference type="STRING" id="598659.NAMH_0183"/>
<dbReference type="KEGG" id="nam:NAMH_0183"/>
<dbReference type="eggNOG" id="COG0049">
    <property type="taxonomic scope" value="Bacteria"/>
</dbReference>
<dbReference type="HOGENOM" id="CLU_072226_1_1_7"/>
<dbReference type="OrthoDB" id="9807653at2"/>
<dbReference type="Proteomes" id="UP000000448">
    <property type="component" value="Chromosome"/>
</dbReference>
<dbReference type="GO" id="GO:0015935">
    <property type="term" value="C:small ribosomal subunit"/>
    <property type="evidence" value="ECO:0007669"/>
    <property type="project" value="InterPro"/>
</dbReference>
<dbReference type="GO" id="GO:0019843">
    <property type="term" value="F:rRNA binding"/>
    <property type="evidence" value="ECO:0007669"/>
    <property type="project" value="UniProtKB-UniRule"/>
</dbReference>
<dbReference type="GO" id="GO:0003735">
    <property type="term" value="F:structural constituent of ribosome"/>
    <property type="evidence" value="ECO:0007669"/>
    <property type="project" value="InterPro"/>
</dbReference>
<dbReference type="GO" id="GO:0000049">
    <property type="term" value="F:tRNA binding"/>
    <property type="evidence" value="ECO:0007669"/>
    <property type="project" value="UniProtKB-UniRule"/>
</dbReference>
<dbReference type="GO" id="GO:0006412">
    <property type="term" value="P:translation"/>
    <property type="evidence" value="ECO:0007669"/>
    <property type="project" value="UniProtKB-UniRule"/>
</dbReference>
<dbReference type="CDD" id="cd14869">
    <property type="entry name" value="uS7_Bacteria"/>
    <property type="match status" value="1"/>
</dbReference>
<dbReference type="FunFam" id="1.10.455.10:FF:000001">
    <property type="entry name" value="30S ribosomal protein S7"/>
    <property type="match status" value="1"/>
</dbReference>
<dbReference type="Gene3D" id="1.10.455.10">
    <property type="entry name" value="Ribosomal protein S7 domain"/>
    <property type="match status" value="1"/>
</dbReference>
<dbReference type="HAMAP" id="MF_00480_B">
    <property type="entry name" value="Ribosomal_uS7_B"/>
    <property type="match status" value="1"/>
</dbReference>
<dbReference type="InterPro" id="IPR000235">
    <property type="entry name" value="Ribosomal_uS7"/>
</dbReference>
<dbReference type="InterPro" id="IPR005717">
    <property type="entry name" value="Ribosomal_uS7_bac/org-type"/>
</dbReference>
<dbReference type="InterPro" id="IPR020606">
    <property type="entry name" value="Ribosomal_uS7_CS"/>
</dbReference>
<dbReference type="InterPro" id="IPR023798">
    <property type="entry name" value="Ribosomal_uS7_dom"/>
</dbReference>
<dbReference type="InterPro" id="IPR036823">
    <property type="entry name" value="Ribosomal_uS7_dom_sf"/>
</dbReference>
<dbReference type="NCBIfam" id="TIGR01029">
    <property type="entry name" value="rpsG_bact"/>
    <property type="match status" value="1"/>
</dbReference>
<dbReference type="PANTHER" id="PTHR11205">
    <property type="entry name" value="RIBOSOMAL PROTEIN S7"/>
    <property type="match status" value="1"/>
</dbReference>
<dbReference type="Pfam" id="PF00177">
    <property type="entry name" value="Ribosomal_S7"/>
    <property type="match status" value="1"/>
</dbReference>
<dbReference type="PIRSF" id="PIRSF002122">
    <property type="entry name" value="RPS7p_RPS7a_RPS5e_RPS7o"/>
    <property type="match status" value="1"/>
</dbReference>
<dbReference type="SUPFAM" id="SSF47973">
    <property type="entry name" value="Ribosomal protein S7"/>
    <property type="match status" value="1"/>
</dbReference>
<dbReference type="PROSITE" id="PS00052">
    <property type="entry name" value="RIBOSOMAL_S7"/>
    <property type="match status" value="1"/>
</dbReference>
<reference key="1">
    <citation type="journal article" date="2009" name="PLoS Genet.">
        <title>Adaptations to submarine hydrothermal environments exemplified by the genome of Nautilia profundicola.</title>
        <authorList>
            <person name="Campbell B.J."/>
            <person name="Smith J.L."/>
            <person name="Hanson T.E."/>
            <person name="Klotz M.G."/>
            <person name="Stein L.Y."/>
            <person name="Lee C.K."/>
            <person name="Wu D."/>
            <person name="Robinson J.M."/>
            <person name="Khouri H.M."/>
            <person name="Eisen J.A."/>
            <person name="Cary S.C."/>
        </authorList>
    </citation>
    <scope>NUCLEOTIDE SEQUENCE [LARGE SCALE GENOMIC DNA]</scope>
    <source>
        <strain>ATCC BAA-1463 / DSM 18972 / AmH</strain>
    </source>
</reference>
<feature type="chain" id="PRO_1000135615" description="Small ribosomal subunit protein uS7">
    <location>
        <begin position="1"/>
        <end position="155"/>
    </location>
</feature>